<accession>Q64339</accession>
<accession>Q8K0H3</accession>
<gene>
    <name type="primary">Isg15</name>
    <name type="synonym">G1p2</name>
    <name type="synonym">Ucrp</name>
</gene>
<name>ISG15_MOUSE</name>
<evidence type="ECO:0000250" key="1"/>
<evidence type="ECO:0000250" key="2">
    <source>
        <dbReference type="UniProtKB" id="P05161"/>
    </source>
</evidence>
<evidence type="ECO:0000255" key="3">
    <source>
        <dbReference type="PROSITE-ProRule" id="PRU00214"/>
    </source>
</evidence>
<evidence type="ECO:0000269" key="4">
    <source>
    </source>
</evidence>
<evidence type="ECO:0000269" key="5">
    <source>
    </source>
</evidence>
<evidence type="ECO:0000269" key="6">
    <source>
    </source>
</evidence>
<evidence type="ECO:0000269" key="7">
    <source>
    </source>
</evidence>
<evidence type="ECO:0000269" key="8">
    <source>
    </source>
</evidence>
<evidence type="ECO:0000269" key="9">
    <source>
    </source>
</evidence>
<evidence type="ECO:0000269" key="10">
    <source>
    </source>
</evidence>
<evidence type="ECO:0000269" key="11">
    <source>
    </source>
</evidence>
<evidence type="ECO:0000269" key="12">
    <source>
    </source>
</evidence>
<evidence type="ECO:0000269" key="13">
    <source>
    </source>
</evidence>
<evidence type="ECO:0000269" key="14">
    <source>
    </source>
</evidence>
<evidence type="ECO:0000305" key="15"/>
<evidence type="ECO:0007744" key="16">
    <source>
        <dbReference type="PDB" id="6YVA"/>
    </source>
</evidence>
<evidence type="ECO:0007829" key="17">
    <source>
        <dbReference type="PDB" id="5CHW"/>
    </source>
</evidence>
<evidence type="ECO:0007829" key="18">
    <source>
        <dbReference type="PDB" id="5TL7"/>
    </source>
</evidence>
<evidence type="ECO:0007829" key="19">
    <source>
        <dbReference type="PDB" id="5TLA"/>
    </source>
</evidence>
<evidence type="ECO:0007829" key="20">
    <source>
        <dbReference type="PDB" id="6J62"/>
    </source>
</evidence>
<evidence type="ECO:0007829" key="21">
    <source>
        <dbReference type="PDB" id="6YVA"/>
    </source>
</evidence>
<sequence>MAWDLKVKMLGGNDFLVSVTNSMTVSELKKQIAQKIGVPAFQQRLAHQTAVLQDGLTLSSLGLGPSSTVMLVVQNCSEPLSILVRNERGHSNIYEVFLTQTVDTLKKKVSQREQVHEDQFWLSFEGRPMEDKELLGEYGLKPQCTVIKHLRLRGGGGDQCA</sequence>
<comment type="function">
    <text evidence="2 5 6 7 8 9 11 12 13 14">Ubiquitin-like protein which plays a key role in the innate immune response to viral infection either via its conjugation to a target protein (ISGylation) or via its action as a free or unconjugated protein. ISGylation involves a cascade of enzymatic reactions involving E1, E2, and E3 enzymes which catalyze the conjugation of ISG15 to a lysine residue in the target protein. Its target proteins include SERPINA3G/SPI2A, JAK1, MAPK3/ERK1, PLCG1, TRIM25, STAT5A, MAPK1/ERK2 and globin. Isgylation of the viral sensor IFIH1/MDA5 promotes IFIH1/MDA5 oligomerization and triggers activation of innate immunity against a range of viruses, including coronaviruses, flaviviruses and picornaviruses. Can also isgylate: RIGI which inhibits its function in antiviral signaling response, IRF3 which inhibits its ubiquitination and degradation as well as EIF4E2 which enhances its cap structure-binding activity and translation-inhibition activity. Exhibits antiviral activity towards both DNA and RNA viruses, including influenza A and B virus, sindbis virus (SV) and herpes simplex type-1 (HHV-1). Plays a significant role in the control of neonatal Chikungunya virus (CHIKV) infection by acting as a putative immunomodulator of pro-inflammatory cytokines. Protects mice against the consequences of Chikungunya virus infection by down-regulating the pathogenic cytokine response, often denoted as the cytokine storm. Plays a role in erythroid differentiation. The secreted form of ISG15 can: induce natural killer cell proliferation, act as a chemotactic factor for neutrophils and act as a IFN-gamma-inducing cytokine playing an essential role in antimycobacterial immunity. The secreted form acts through the integrin ITGAL/ITGB2 receptor to initiate activation of SRC family tyrosine kinases including LYN, HCK and FGR which leads to secretion of IFNG and IL10; the interaction is mediated by ITGAL (By similarity).</text>
</comment>
<comment type="subunit">
    <text evidence="2">Homodimer; disulfide-linked (By similarity). Interacts with, and is conjugated to its targets by the UBE1L (E1 enzyme) and UBE2E2 (E2 enzyme) (By similarity). Interacts with NEDD4 (By similarity). Interacts with PARP12; this interaction inhibits PINK1/Parkin-dependent mitophagy (By similarity).</text>
</comment>
<comment type="interaction">
    <interactant intactId="EBI-8345781">
        <id>Q64339</id>
    </interactant>
    <interactant intactId="EBI-9119995">
        <id>Q9WTV6</id>
        <label>Usp18</label>
    </interactant>
    <organismsDiffer>false</organismsDiffer>
    <experiments>4</experiments>
</comment>
<comment type="interaction">
    <interactant intactId="EBI-8345781">
        <id>Q64339</id>
    </interactant>
    <interactant intactId="EBI-25635184">
        <id>PRO_0000422456</id>
        <label>1a</label>
        <dbReference type="UniProtKB" id="K9N638"/>
    </interactant>
    <organismsDiffer>true</organismsDiffer>
    <experiments>2</experiments>
</comment>
<comment type="interaction">
    <interactant intactId="EBI-8345781">
        <id>Q64339</id>
    </interactant>
    <interactant intactId="EBI-25635190">
        <id>PRO_0000338257</id>
        <label>1a</label>
        <dbReference type="UniProtKB" id="P0C6U8"/>
    </interactant>
    <organismsDiffer>true</organismsDiffer>
    <experiments>3</experiments>
</comment>
<comment type="interaction">
    <interactant intactId="EBI-8345781">
        <id>Q64339</id>
    </interactant>
    <interactant intactId="EBI-25474079">
        <id>PRO_0000037311</id>
        <label>rep</label>
        <dbReference type="UniProtKB" id="P0C6X7"/>
    </interactant>
    <organismsDiffer>true</organismsDiffer>
    <experiments>4</experiments>
</comment>
<comment type="interaction">
    <interactant intactId="EBI-8345781">
        <id>Q64339</id>
    </interactant>
    <interactant intactId="EBI-25492388">
        <id>PRO_0000449621</id>
        <label>rep</label>
        <dbReference type="UniProtKB" id="P0DTD1"/>
    </interactant>
    <organismsDiffer>true</organismsDiffer>
    <experiments>5</experiments>
</comment>
<comment type="subcellular location">
    <subcellularLocation>
        <location evidence="2">Cytoplasm</location>
    </subcellularLocation>
    <subcellularLocation>
        <location evidence="2">Secreted</location>
    </subcellularLocation>
    <text evidence="2">Exists in three distinct states: free within the cell, released into the extracellular space, or conjugated to target proteins.</text>
</comment>
<comment type="induction">
    <text>By type I interferons.</text>
</comment>
<comment type="domain">
    <text evidence="2">Both the Ubiquitin-like 1 and Ubiquitin-like 2 domains are required for its efficient conjugation to cellular proteins. The two domains play different roles in the ISGylation pathway: Ubiquitin-like 2 domain is necessary for the first two steps allowing the linking of ISG15 to the E1 and E2 enzymes while Ubiquitin-like 1 domain is essential for the final, E3-mediated transfer of ISG15, from the E2 to the Lys of the target protein.</text>
</comment>
<comment type="PTM">
    <text evidence="10">S-nitrosylation decreases its dimerization, thereby increasing the availability as well as the solubility of monomeric ISG15 for its conjugation to cellular proteins.</text>
</comment>
<comment type="PTM">
    <text evidence="2">Induced as an inactive, precursor protein that is cleaved by specific proteases to expose the C-terminal diglycine (LRLRGG) motif. This motif is essential not only for its conjugation to substrates but also for its recognition by the relevant processing proteases (By similarity).</text>
</comment>
<comment type="mass spectrometry"/>
<keyword id="KW-0002">3D-structure</keyword>
<keyword id="KW-0051">Antiviral defense</keyword>
<keyword id="KW-0963">Cytoplasm</keyword>
<keyword id="KW-0903">Direct protein sequencing</keyword>
<keyword id="KW-1015">Disulfide bond</keyword>
<keyword id="KW-1017">Isopeptide bond</keyword>
<keyword id="KW-1185">Reference proteome</keyword>
<keyword id="KW-0677">Repeat</keyword>
<keyword id="KW-0702">S-nitrosylation</keyword>
<keyword id="KW-0964">Secreted</keyword>
<keyword id="KW-0833">Ubl conjugation pathway</keyword>
<dbReference type="EMBL" id="X56602">
    <property type="protein sequence ID" value="CAA39939.1"/>
    <property type="molecule type" value="mRNA"/>
</dbReference>
<dbReference type="EMBL" id="U58202">
    <property type="protein sequence ID" value="AAB02697.1"/>
    <property type="molecule type" value="Genomic_DNA"/>
</dbReference>
<dbReference type="EMBL" id="BC031424">
    <property type="protein sequence ID" value="AAH31424.1"/>
    <property type="molecule type" value="mRNA"/>
</dbReference>
<dbReference type="EMBL" id="BC083156">
    <property type="protein sequence ID" value="AAH83156.1"/>
    <property type="molecule type" value="mRNA"/>
</dbReference>
<dbReference type="CCDS" id="CCDS51405.1"/>
<dbReference type="PIR" id="S26434">
    <property type="entry name" value="S26434"/>
</dbReference>
<dbReference type="RefSeq" id="NP_056598.2">
    <property type="nucleotide sequence ID" value="NM_015783.3"/>
</dbReference>
<dbReference type="PDB" id="5CHF">
    <property type="method" value="X-ray"/>
    <property type="resolution" value="2.30 A"/>
    <property type="chains" value="A/B/C/D/E=1-155"/>
</dbReference>
<dbReference type="PDB" id="5CHV">
    <property type="method" value="X-ray"/>
    <property type="resolution" value="3.00 A"/>
    <property type="chains" value="C/D=1-155"/>
</dbReference>
<dbReference type="PDB" id="5CHW">
    <property type="method" value="X-ray"/>
    <property type="resolution" value="2.10 A"/>
    <property type="chains" value="A/B/C/D/E/F/G/H/I/J=1-155"/>
</dbReference>
<dbReference type="PDB" id="5JZE">
    <property type="method" value="X-ray"/>
    <property type="resolution" value="2.47 A"/>
    <property type="chains" value="B/D=79-154"/>
</dbReference>
<dbReference type="PDB" id="5TL7">
    <property type="method" value="X-ray"/>
    <property type="resolution" value="2.44 A"/>
    <property type="chains" value="A/C=78-155"/>
</dbReference>
<dbReference type="PDB" id="5TLA">
    <property type="method" value="X-ray"/>
    <property type="resolution" value="3.24 A"/>
    <property type="chains" value="A/B/C/D/E/F/G/H/I/J=1-150"/>
</dbReference>
<dbReference type="PDB" id="6J62">
    <property type="method" value="X-ray"/>
    <property type="resolution" value="2.49 A"/>
    <property type="chains" value="A=1-153"/>
</dbReference>
<dbReference type="PDB" id="6YVA">
    <property type="method" value="X-ray"/>
    <property type="resolution" value="3.18 A"/>
    <property type="chains" value="C=1-161"/>
</dbReference>
<dbReference type="PDBsum" id="5CHF"/>
<dbReference type="PDBsum" id="5CHV"/>
<dbReference type="PDBsum" id="5CHW"/>
<dbReference type="PDBsum" id="5JZE"/>
<dbReference type="PDBsum" id="5TL7"/>
<dbReference type="PDBsum" id="5TLA"/>
<dbReference type="PDBsum" id="6J62"/>
<dbReference type="PDBsum" id="6YVA"/>
<dbReference type="SMR" id="Q64339"/>
<dbReference type="BioGRID" id="782389">
    <property type="interactions" value="37"/>
</dbReference>
<dbReference type="FunCoup" id="Q64339">
    <property type="interactions" value="381"/>
</dbReference>
<dbReference type="IntAct" id="Q64339">
    <property type="interactions" value="8"/>
</dbReference>
<dbReference type="MINT" id="Q64339"/>
<dbReference type="STRING" id="10090.ENSMUSP00000082548"/>
<dbReference type="GlyGen" id="Q64339">
    <property type="glycosylation" value="1 site, 1 O-linked glycan (1 site)"/>
</dbReference>
<dbReference type="iPTMnet" id="Q64339"/>
<dbReference type="PhosphoSitePlus" id="Q64339"/>
<dbReference type="SwissPalm" id="Q64339"/>
<dbReference type="CPTAC" id="non-CPTAC-3583"/>
<dbReference type="jPOST" id="Q64339"/>
<dbReference type="PaxDb" id="10090-ENSMUSP00000082548"/>
<dbReference type="ProteomicsDB" id="269337"/>
<dbReference type="Pumba" id="Q64339"/>
<dbReference type="Antibodypedia" id="809">
    <property type="antibodies" value="565 antibodies from 40 providers"/>
</dbReference>
<dbReference type="Ensembl" id="ENSMUST00000085425.6">
    <property type="protein sequence ID" value="ENSMUSP00000082548.5"/>
    <property type="gene ID" value="ENSMUSG00000035692.8"/>
</dbReference>
<dbReference type="GeneID" id="100038882"/>
<dbReference type="KEGG" id="mmu:100038882"/>
<dbReference type="UCSC" id="uc012dri.1">
    <property type="organism name" value="mouse"/>
</dbReference>
<dbReference type="AGR" id="MGI:1855694"/>
<dbReference type="CTD" id="9636"/>
<dbReference type="MGI" id="MGI:1855694">
    <property type="gene designation" value="Isg15"/>
</dbReference>
<dbReference type="VEuPathDB" id="HostDB:ENSMUSG00000035692"/>
<dbReference type="eggNOG" id="KOG0001">
    <property type="taxonomic scope" value="Eukaryota"/>
</dbReference>
<dbReference type="GeneTree" id="ENSGT00940000162007"/>
<dbReference type="HOGENOM" id="CLU_010412_4_2_1"/>
<dbReference type="InParanoid" id="Q64339"/>
<dbReference type="OMA" id="CTVYMNL"/>
<dbReference type="OrthoDB" id="1885901at2759"/>
<dbReference type="PhylomeDB" id="Q64339"/>
<dbReference type="TreeFam" id="TF338379"/>
<dbReference type="Reactome" id="R-MMU-1169408">
    <property type="pathway name" value="ISG15 antiviral mechanism"/>
</dbReference>
<dbReference type="Reactome" id="R-MMU-5656169">
    <property type="pathway name" value="Termination of translesion DNA synthesis"/>
</dbReference>
<dbReference type="Reactome" id="R-MMU-9833482">
    <property type="pathway name" value="PKR-mediated signaling"/>
</dbReference>
<dbReference type="Reactome" id="R-MMU-9909505">
    <property type="pathway name" value="Modulation of host responses by IFN-stimulated genes"/>
</dbReference>
<dbReference type="BioGRID-ORCS" id="100038882">
    <property type="hits" value="1 hit in 80 CRISPR screens"/>
</dbReference>
<dbReference type="PRO" id="PR:Q64339"/>
<dbReference type="Proteomes" id="UP000000589">
    <property type="component" value="Chromosome 4"/>
</dbReference>
<dbReference type="RNAct" id="Q64339">
    <property type="molecule type" value="protein"/>
</dbReference>
<dbReference type="Bgee" id="ENSMUSG00000035692">
    <property type="expression patterns" value="Expressed in bone marrow and 70 other cell types or tissues"/>
</dbReference>
<dbReference type="ExpressionAtlas" id="Q64339">
    <property type="expression patterns" value="baseline and differential"/>
</dbReference>
<dbReference type="GO" id="GO:0005737">
    <property type="term" value="C:cytoplasm"/>
    <property type="evidence" value="ECO:0007669"/>
    <property type="project" value="UniProtKB-SubCell"/>
</dbReference>
<dbReference type="GO" id="GO:0005576">
    <property type="term" value="C:extracellular region"/>
    <property type="evidence" value="ECO:0000250"/>
    <property type="project" value="UniProtKB"/>
</dbReference>
<dbReference type="GO" id="GO:0005178">
    <property type="term" value="F:integrin binding"/>
    <property type="evidence" value="ECO:0000250"/>
    <property type="project" value="UniProtKB"/>
</dbReference>
<dbReference type="GO" id="GO:0031386">
    <property type="term" value="F:protein tag activity"/>
    <property type="evidence" value="ECO:0000314"/>
    <property type="project" value="MGI"/>
</dbReference>
<dbReference type="GO" id="GO:0042742">
    <property type="term" value="P:defense response to bacterium"/>
    <property type="evidence" value="ECO:0000315"/>
    <property type="project" value="UniProtKB"/>
</dbReference>
<dbReference type="GO" id="GO:0051607">
    <property type="term" value="P:defense response to virus"/>
    <property type="evidence" value="ECO:0000315"/>
    <property type="project" value="UniProtKB"/>
</dbReference>
<dbReference type="GO" id="GO:0007229">
    <property type="term" value="P:integrin-mediated signaling pathway"/>
    <property type="evidence" value="ECO:0000250"/>
    <property type="project" value="UniProtKB"/>
</dbReference>
<dbReference type="GO" id="GO:0032020">
    <property type="term" value="P:ISG15-protein conjugation"/>
    <property type="evidence" value="ECO:0000314"/>
    <property type="project" value="UniProtKB"/>
</dbReference>
<dbReference type="GO" id="GO:0019941">
    <property type="term" value="P:modification-dependent protein catabolic process"/>
    <property type="evidence" value="ECO:0000314"/>
    <property type="project" value="MGI"/>
</dbReference>
<dbReference type="GO" id="GO:0031397">
    <property type="term" value="P:negative regulation of protein ubiquitination"/>
    <property type="evidence" value="ECO:0000250"/>
    <property type="project" value="UniProtKB"/>
</dbReference>
<dbReference type="GO" id="GO:0060339">
    <property type="term" value="P:negative regulation of type I interferon-mediated signaling pathway"/>
    <property type="evidence" value="ECO:0007669"/>
    <property type="project" value="Ensembl"/>
</dbReference>
<dbReference type="GO" id="GO:0045071">
    <property type="term" value="P:negative regulation of viral genome replication"/>
    <property type="evidence" value="ECO:0000250"/>
    <property type="project" value="UniProtKB"/>
</dbReference>
<dbReference type="GO" id="GO:0030501">
    <property type="term" value="P:positive regulation of bone mineralization"/>
    <property type="evidence" value="ECO:0000315"/>
    <property type="project" value="UniProtKB"/>
</dbReference>
<dbReference type="GO" id="GO:0045648">
    <property type="term" value="P:positive regulation of erythrocyte differentiation"/>
    <property type="evidence" value="ECO:0000315"/>
    <property type="project" value="UniProtKB"/>
</dbReference>
<dbReference type="GO" id="GO:0032728">
    <property type="term" value="P:positive regulation of interferon-beta production"/>
    <property type="evidence" value="ECO:0000250"/>
    <property type="project" value="UniProtKB"/>
</dbReference>
<dbReference type="GO" id="GO:0032733">
    <property type="term" value="P:positive regulation of interleukin-10 production"/>
    <property type="evidence" value="ECO:0000250"/>
    <property type="project" value="UniProtKB"/>
</dbReference>
<dbReference type="GO" id="GO:0032461">
    <property type="term" value="P:positive regulation of protein oligomerization"/>
    <property type="evidence" value="ECO:0000250"/>
    <property type="project" value="UniProtKB"/>
</dbReference>
<dbReference type="GO" id="GO:0032729">
    <property type="term" value="P:positive regulation of type II interferon production"/>
    <property type="evidence" value="ECO:0000250"/>
    <property type="project" value="UniProtKB"/>
</dbReference>
<dbReference type="GO" id="GO:0070585">
    <property type="term" value="P:protein localization to mitochondrion"/>
    <property type="evidence" value="ECO:0000250"/>
    <property type="project" value="UniProtKB"/>
</dbReference>
<dbReference type="GO" id="GO:0032649">
    <property type="term" value="P:regulation of type II interferon production"/>
    <property type="evidence" value="ECO:0000250"/>
    <property type="project" value="UniProtKB"/>
</dbReference>
<dbReference type="GO" id="GO:0009617">
    <property type="term" value="P:response to bacterium"/>
    <property type="evidence" value="ECO:0000270"/>
    <property type="project" value="MGI"/>
</dbReference>
<dbReference type="GO" id="GO:0034340">
    <property type="term" value="P:response to type I interferon"/>
    <property type="evidence" value="ECO:0000250"/>
    <property type="project" value="UniProtKB"/>
</dbReference>
<dbReference type="GO" id="GO:0009615">
    <property type="term" value="P:response to virus"/>
    <property type="evidence" value="ECO:0000250"/>
    <property type="project" value="UniProtKB"/>
</dbReference>
<dbReference type="CDD" id="cd01792">
    <property type="entry name" value="Ubl1_ISG15"/>
    <property type="match status" value="1"/>
</dbReference>
<dbReference type="CDD" id="cd01810">
    <property type="entry name" value="Ubl2_ISG15"/>
    <property type="match status" value="1"/>
</dbReference>
<dbReference type="FunFam" id="3.10.20.90:FF:000240">
    <property type="entry name" value="ISG15 ubiquitin-like modifier"/>
    <property type="match status" value="1"/>
</dbReference>
<dbReference type="FunFam" id="3.10.20.90:FF:000264">
    <property type="entry name" value="ISG15 ubiquitin-like modifier"/>
    <property type="match status" value="1"/>
</dbReference>
<dbReference type="Gene3D" id="3.10.20.90">
    <property type="entry name" value="Phosphatidylinositol 3-kinase Catalytic Subunit, Chain A, domain 1"/>
    <property type="match status" value="2"/>
</dbReference>
<dbReference type="InterPro" id="IPR015496">
    <property type="entry name" value="Ubiquilin"/>
</dbReference>
<dbReference type="InterPro" id="IPR000626">
    <property type="entry name" value="Ubiquitin-like_dom"/>
</dbReference>
<dbReference type="InterPro" id="IPR029071">
    <property type="entry name" value="Ubiquitin-like_domsf"/>
</dbReference>
<dbReference type="PANTHER" id="PTHR10677:SF3">
    <property type="entry name" value="FI07626P-RELATED"/>
    <property type="match status" value="1"/>
</dbReference>
<dbReference type="PANTHER" id="PTHR10677">
    <property type="entry name" value="UBIQUILIN"/>
    <property type="match status" value="1"/>
</dbReference>
<dbReference type="Pfam" id="PF00240">
    <property type="entry name" value="ubiquitin"/>
    <property type="match status" value="2"/>
</dbReference>
<dbReference type="SMART" id="SM00213">
    <property type="entry name" value="UBQ"/>
    <property type="match status" value="2"/>
</dbReference>
<dbReference type="SUPFAM" id="SSF54236">
    <property type="entry name" value="Ubiquitin-like"/>
    <property type="match status" value="2"/>
</dbReference>
<dbReference type="PROSITE" id="PS50053">
    <property type="entry name" value="UBIQUITIN_2"/>
    <property type="match status" value="2"/>
</dbReference>
<protein>
    <recommendedName>
        <fullName>Ubiquitin-like protein ISG15</fullName>
    </recommendedName>
    <alternativeName>
        <fullName>Interferon-induced 15 kDa protein</fullName>
    </alternativeName>
    <alternativeName>
        <fullName>Interferon-induced 17 kDa protein</fullName>
        <shortName>IP17</shortName>
    </alternativeName>
    <alternativeName>
        <fullName>Ubiquitin cross-reactive protein</fullName>
    </alternativeName>
</protein>
<feature type="chain" id="PRO_0000035988" description="Ubiquitin-like protein ISG15">
    <location>
        <begin position="1"/>
        <end position="155"/>
    </location>
</feature>
<feature type="propeptide" id="PRO_0000035989" description="Removed in mature form" evidence="1">
    <location>
        <begin position="156"/>
        <end position="161"/>
    </location>
</feature>
<feature type="domain" description="Ubiquitin-like 1" evidence="3">
    <location>
        <begin position="2"/>
        <end position="76"/>
    </location>
</feature>
<feature type="domain" description="Ubiquitin-like 2" evidence="3">
    <location>
        <begin position="77"/>
        <end position="155"/>
    </location>
</feature>
<feature type="region of interest" description="Involved in the ligation of specific target proteins" evidence="1">
    <location>
        <begin position="151"/>
        <end position="155"/>
    </location>
</feature>
<feature type="short sequence motif" description="LRLRGG" evidence="1">
    <location>
        <begin position="150"/>
        <end position="155"/>
    </location>
</feature>
<feature type="site" description="Interacts with activating enzyme" evidence="1">
    <location>
        <position position="151"/>
    </location>
</feature>
<feature type="modified residue" description="S-nitrosocysteine" evidence="10">
    <location>
        <position position="76"/>
    </location>
</feature>
<feature type="modified residue" description="S-nitrosocysteine" evidence="10">
    <location>
        <position position="144"/>
    </location>
</feature>
<feature type="cross-link" description="Glycyl lysine isopeptide (Gly-Lys) (interchain with K-? in acceptor proteins)" evidence="3">
    <location>
        <position position="155"/>
    </location>
</feature>
<feature type="sequence conflict" description="In Ref. 1; CAA39939 and 2; AAB02697." evidence="15" ref="1 2">
    <original>QREQV</original>
    <variation>SGTS</variation>
    <location>
        <begin position="111"/>
        <end position="115"/>
    </location>
</feature>
<feature type="strand" evidence="17">
    <location>
        <begin position="3"/>
        <end position="9"/>
    </location>
</feature>
<feature type="strand" evidence="21">
    <location>
        <begin position="10"/>
        <end position="12"/>
    </location>
</feature>
<feature type="strand" evidence="17">
    <location>
        <begin position="14"/>
        <end position="19"/>
    </location>
</feature>
<feature type="helix" evidence="17">
    <location>
        <begin position="25"/>
        <end position="36"/>
    </location>
</feature>
<feature type="helix" evidence="17">
    <location>
        <begin position="40"/>
        <end position="42"/>
    </location>
</feature>
<feature type="strand" evidence="17">
    <location>
        <begin position="43"/>
        <end position="47"/>
    </location>
</feature>
<feature type="helix" evidence="17">
    <location>
        <begin position="59"/>
        <end position="61"/>
    </location>
</feature>
<feature type="strand" evidence="17">
    <location>
        <begin position="68"/>
        <end position="73"/>
    </location>
</feature>
<feature type="strand" evidence="17">
    <location>
        <begin position="80"/>
        <end position="85"/>
    </location>
</feature>
<feature type="strand" evidence="18">
    <location>
        <begin position="87"/>
        <end position="89"/>
    </location>
</feature>
<feature type="strand" evidence="17">
    <location>
        <begin position="91"/>
        <end position="96"/>
    </location>
</feature>
<feature type="helix" evidence="17">
    <location>
        <begin position="102"/>
        <end position="113"/>
    </location>
</feature>
<feature type="helix" evidence="17">
    <location>
        <begin position="117"/>
        <end position="119"/>
    </location>
</feature>
<feature type="strand" evidence="17">
    <location>
        <begin position="120"/>
        <end position="124"/>
    </location>
</feature>
<feature type="strand" evidence="20">
    <location>
        <begin position="127"/>
        <end position="129"/>
    </location>
</feature>
<feature type="strand" evidence="19">
    <location>
        <begin position="131"/>
        <end position="134"/>
    </location>
</feature>
<feature type="helix" evidence="17">
    <location>
        <begin position="135"/>
        <end position="138"/>
    </location>
</feature>
<feature type="strand" evidence="17">
    <location>
        <begin position="145"/>
        <end position="150"/>
    </location>
</feature>
<reference key="1">
    <citation type="submission" date="1992-10" db="EMBL/GenBank/DDBJ databases">
        <title>Nucleotide sequence and deduced amino acid sequence of a cDNA encoding an interferon-induced mouse 15-KDa protein.</title>
        <authorList>
            <person name="Fahey D."/>
        </authorList>
    </citation>
    <scope>NUCLEOTIDE SEQUENCE [MRNA]</scope>
    <source>
        <strain>BALB/cJ</strain>
    </source>
</reference>
<reference key="2">
    <citation type="submission" date="1996-06" db="EMBL/GenBank/DDBJ databases">
        <title>Sequence differences between murine ISG15, human ISG15 and ubiquitin: a functional divergence from ubiquitin.</title>
        <authorList>
            <person name="Garlie N.K."/>
            <person name="Haas A.L."/>
            <person name="D'Cunha J."/>
            <person name="Schilling D."/>
            <person name="Knight E. Jr."/>
            <person name="Borden E.C."/>
        </authorList>
    </citation>
    <scope>NUCLEOTIDE SEQUENCE [GENOMIC DNA]</scope>
</reference>
<reference key="3">
    <citation type="journal article" date="2004" name="Genome Res.">
        <title>The status, quality, and expansion of the NIH full-length cDNA project: the Mammalian Gene Collection (MGC).</title>
        <authorList>
            <consortium name="The MGC Project Team"/>
        </authorList>
    </citation>
    <scope>NUCLEOTIDE SEQUENCE [LARGE SCALE MRNA]</scope>
    <source>
        <tissue>Mammary gland</tissue>
    </source>
</reference>
<reference key="4">
    <citation type="journal article" date="2002" name="J. Immunol.">
        <title>Serpin 2a is induced in activated macrophages and conjugates to a ubiquitin homolog.</title>
        <authorList>
            <person name="Hamerman J.A."/>
            <person name="Hayashi F."/>
            <person name="Schroeder L.A."/>
            <person name="Gygi S.P."/>
            <person name="Haas A.L."/>
            <person name="Hampson L."/>
            <person name="Coughlin P."/>
            <person name="Aebersold R."/>
            <person name="Aderem A."/>
        </authorList>
    </citation>
    <scope>PROTEIN SEQUENCE OF 9-30; 36-44 AND 89-106</scope>
    <scope>CONJUGATION TO SERPINA3G</scope>
</reference>
<reference key="5">
    <citation type="journal article" date="2003" name="Biochem. Biophys. Res. Commun.">
        <title>Identification of a ubiquitin family protein as a novel neutrophil chemotactic factor.</title>
        <authorList>
            <person name="Owhashi M."/>
            <person name="Taoka Y."/>
            <person name="Ishii K."/>
            <person name="Nakazawa S."/>
            <person name="Uemura H."/>
            <person name="Kambara H."/>
        </authorList>
    </citation>
    <scope>PARTIAL PROTEIN SEQUENCE</scope>
    <scope>CHEMOTACTIC ACTIVITY</scope>
    <scope>MASS SPECTROMETRY</scope>
</reference>
<reference key="6">
    <citation type="journal article" date="2003" name="J. Biol. Chem.">
        <title>High-throughput immunoblotting. Ubiquitin-like protein ISG15 modifies key regulators of signal transduction.</title>
        <authorList>
            <person name="Malakhov M.P."/>
            <person name="Kim K.I."/>
            <person name="Malakhova O.A."/>
            <person name="Jacobs B.S."/>
            <person name="Borden E.C."/>
            <person name="Zhang D.-E."/>
        </authorList>
    </citation>
    <scope>CONJUGATION TO JAK1; MAPK3 AND PLCG1</scope>
</reference>
<reference key="7">
    <citation type="journal article" date="2005" name="J. Virol.">
        <title>Identification of interferon-stimulated gene 15 as an antiviral molecule during Sindbis virus infection in vivo.</title>
        <authorList>
            <person name="Lenschow D.J."/>
            <person name="Giannakopoulos N.V."/>
            <person name="Gunn L.J."/>
            <person name="Johnston C."/>
            <person name="O'Guin A.K."/>
            <person name="Schmidt R.E."/>
            <person name="Levine B."/>
            <person name="Virgin H.W. IV"/>
        </authorList>
    </citation>
    <scope>FUNCTION IN SINDBIS VIRUS RESTRICTION</scope>
</reference>
<reference key="8">
    <citation type="journal article" date="2007" name="Biochem. Biophys. Res. Commun.">
        <title>Negative regulation of ISG15 E3 ligase EFP through its autoISGylation.</title>
        <authorList>
            <person name="Zou W."/>
            <person name="Wang J."/>
            <person name="Zhang D.-E."/>
        </authorList>
    </citation>
    <scope>FUNCTION IN TRIM25 ISGYLATION</scope>
</reference>
<reference key="9">
    <citation type="journal article" date="2007" name="Genes Dev.">
        <title>ISG15 modification of the eIF4E cognate 4EHP enhances cap structure-binding activity of 4EHP.</title>
        <authorList>
            <person name="Okumura F."/>
            <person name="Zou W."/>
            <person name="Zhang D.E."/>
        </authorList>
    </citation>
    <scope>FUNCTION IN EIF4E2 ISGYLATION</scope>
</reference>
<reference key="10">
    <citation type="journal article" date="2007" name="Proc. Natl. Acad. Sci. U.S.A.">
        <title>IFN-stimulated gene 15 functions as a critical antiviral molecule against influenza, herpes, and Sindbis viruses.</title>
        <authorList>
            <person name="Lenschow D.J."/>
            <person name="Lai C."/>
            <person name="Frias-Staheli N."/>
            <person name="Giannakopoulos N.V."/>
            <person name="Lutz A."/>
            <person name="Wolff T."/>
            <person name="Osiak A."/>
            <person name="Levine B."/>
            <person name="Schmidt R.E."/>
            <person name="Garcia-Sastre A."/>
            <person name="Leib D.A."/>
            <person name="Pekosz A."/>
            <person name="Knobeloch K.P."/>
            <person name="Horak I."/>
            <person name="Virgin H.W. IV"/>
        </authorList>
    </citation>
    <scope>FUNCTION IN HHV-1; SV; INFLUENZA A AND B VIRUS RESTRICTION</scope>
</reference>
<reference key="11">
    <citation type="journal article" date="2008" name="J. Biol. Chem.">
        <title>Nitrosylation of ISG15 prevents the disulfide bond-mediated dimerization of ISG15 and contributes to effective ISGylation.</title>
        <authorList>
            <person name="Okumura F."/>
            <person name="Lenschow D.J."/>
            <person name="Zhang D.E."/>
        </authorList>
    </citation>
    <scope>SUBUNIT</scope>
    <scope>S-NITROSYLATION AT CYS-76 AND CYS-144</scope>
</reference>
<reference key="12">
    <citation type="journal article" date="2008" name="J. Virol.">
        <title>Negative feedback regulation of RIG-I-mediated antiviral signaling by interferon-induced ISG15 conjugation.</title>
        <authorList>
            <person name="Kim M.J."/>
            <person name="Hwang S.Y."/>
            <person name="Imaizumi T."/>
            <person name="Yoo J.Y."/>
        </authorList>
    </citation>
    <scope>FUNCTION IN RIGI ISGYLATION</scope>
</reference>
<reference key="13">
    <citation type="journal article" date="2010" name="Cell">
        <title>A tissue-specific atlas of mouse protein phosphorylation and expression.</title>
        <authorList>
            <person name="Huttlin E.L."/>
            <person name="Jedrychowski M.P."/>
            <person name="Elias J.E."/>
            <person name="Goswami T."/>
            <person name="Rad R."/>
            <person name="Beausoleil S.A."/>
            <person name="Villen J."/>
            <person name="Haas W."/>
            <person name="Sowa M.E."/>
            <person name="Gygi S.P."/>
        </authorList>
    </citation>
    <scope>IDENTIFICATION BY MASS SPECTROMETRY [LARGE SCALE ANALYSIS]</scope>
    <source>
        <tissue>Brain</tissue>
        <tissue>Brown adipose tissue</tissue>
        <tissue>Heart</tissue>
        <tissue>Kidney</tissue>
        <tissue>Liver</tissue>
        <tissue>Lung</tissue>
        <tissue>Pancreas</tissue>
        <tissue>Spleen</tissue>
    </source>
</reference>
<reference key="14">
    <citation type="journal article" date="2010" name="Cell">
        <title>Emerging role of ISG15 in antiviral immunity.</title>
        <authorList>
            <person name="Skaug B."/>
            <person name="Chen Z.J."/>
        </authorList>
    </citation>
    <scope>REVIEW</scope>
</reference>
<reference key="15">
    <citation type="journal article" date="2011" name="PLoS ONE">
        <title>ISG15 modulates development of the erythroid lineage.</title>
        <authorList>
            <person name="Maragno A.L."/>
            <person name="Pironin M."/>
            <person name="Alcalde H."/>
            <person name="Cong X."/>
            <person name="Knobeloch K.P."/>
            <person name="Tangy F."/>
            <person name="Zhang D.E."/>
            <person name="Ghysdael J."/>
            <person name="Quang C.T."/>
        </authorList>
    </citation>
    <scope>FUNCTION IN STAT5A; MAPK1; PLC-GAMMA AND GLOBIN ISGYLATION</scope>
</reference>
<reference key="16">
    <citation type="journal article" date="2011" name="PLoS Pathog.">
        <title>ISG15 is critical in the control of Chikungunya virus infection independent of UbE1L mediated conjugation.</title>
        <authorList>
            <person name="Werneke S.W."/>
            <person name="Schilte C."/>
            <person name="Rohatgi A."/>
            <person name="Monte K.J."/>
            <person name="Michault A."/>
            <person name="Arenzana-Seisdedos F."/>
            <person name="Vanlandingham D.L."/>
            <person name="Higgs S."/>
            <person name="Fontanet A."/>
            <person name="Albert M.L."/>
            <person name="Lenschow D.J."/>
        </authorList>
    </citation>
    <scope>FUNCTION</scope>
</reference>
<reference key="17">
    <citation type="journal article" date="2012" name="Science">
        <title>Mycobacterial disease and impaired IFN-gamma immunity in humans with inherited ISG15 deficiency.</title>
        <authorList>
            <person name="Bogunovic D."/>
            <person name="Byun M."/>
            <person name="Durfee L.A."/>
            <person name="Abhyankar A."/>
            <person name="Sanal O."/>
            <person name="Mansouri D."/>
            <person name="Salem S."/>
            <person name="Radovanovic I."/>
            <person name="Grant A.V."/>
            <person name="Adimi P."/>
            <person name="Mansouri N."/>
            <person name="Okada S."/>
            <person name="Bryant V.L."/>
            <person name="Kong X.F."/>
            <person name="Kreins A."/>
            <person name="Velez M.M."/>
            <person name="Boisson B."/>
            <person name="Khalilzadeh S."/>
            <person name="Ozcelik U."/>
            <person name="Darazam I.A."/>
            <person name="Schoggins J.W."/>
            <person name="Rice C.M."/>
            <person name="Al-Muhsen S."/>
            <person name="Behr M."/>
            <person name="Vogt G."/>
            <person name="Puel A."/>
            <person name="Bustamante J."/>
            <person name="Gros P."/>
            <person name="Huibregtse J.M."/>
            <person name="Abel L."/>
            <person name="Boisson-Dupuis S."/>
            <person name="Casanova J.L."/>
        </authorList>
    </citation>
    <scope>FUNCTION</scope>
</reference>
<reference evidence="16" key="18">
    <citation type="journal article" date="2020" name="Nature">
        <title>Papain-like protease regulates SARS-CoV-2 viral spread and innate immunity.</title>
        <authorList>
            <person name="Shin D."/>
            <person name="Mukherjee R."/>
            <person name="Grewe D."/>
            <person name="Bojkova D."/>
            <person name="Baek K."/>
            <person name="Bhattacharya A."/>
            <person name="Schulz L."/>
            <person name="Widera M."/>
            <person name="Mehdipour A.R."/>
            <person name="Tascher G."/>
            <person name="Geurink P.P."/>
            <person name="Wilhelm A."/>
            <person name="van der Heden van Noort G.J."/>
            <person name="Ovaa H."/>
            <person name="Mueller S."/>
            <person name="Knobeloch K.P."/>
            <person name="Rajalingam K."/>
            <person name="Schulman B.A."/>
            <person name="Cinatl J."/>
            <person name="Hummer G."/>
            <person name="Ciesek S."/>
            <person name="Dikic I."/>
        </authorList>
    </citation>
    <scope>X-RAY CRYSTALLOGRAPHY (3.18 ANGSTROMS) OF 1-156 IN COMPLEX WITH SARS-COV-2 NON-STRUCTURAL PROTEIN 3</scope>
    <scope>FUNCTION</scope>
</reference>
<proteinExistence type="evidence at protein level"/>
<organism>
    <name type="scientific">Mus musculus</name>
    <name type="common">Mouse</name>
    <dbReference type="NCBI Taxonomy" id="10090"/>
    <lineage>
        <taxon>Eukaryota</taxon>
        <taxon>Metazoa</taxon>
        <taxon>Chordata</taxon>
        <taxon>Craniata</taxon>
        <taxon>Vertebrata</taxon>
        <taxon>Euteleostomi</taxon>
        <taxon>Mammalia</taxon>
        <taxon>Eutheria</taxon>
        <taxon>Euarchontoglires</taxon>
        <taxon>Glires</taxon>
        <taxon>Rodentia</taxon>
        <taxon>Myomorpha</taxon>
        <taxon>Muroidea</taxon>
        <taxon>Muridae</taxon>
        <taxon>Murinae</taxon>
        <taxon>Mus</taxon>
        <taxon>Mus</taxon>
    </lineage>
</organism>